<reference key="1">
    <citation type="journal article" date="2008" name="DNA Res.">
        <title>Complete genome sequence and comparative analysis of the wild-type commensal Escherichia coli strain SE11 isolated from a healthy adult.</title>
        <authorList>
            <person name="Oshima K."/>
            <person name="Toh H."/>
            <person name="Ogura Y."/>
            <person name="Sasamoto H."/>
            <person name="Morita H."/>
            <person name="Park S.-H."/>
            <person name="Ooka T."/>
            <person name="Iyoda S."/>
            <person name="Taylor T.D."/>
            <person name="Hayashi T."/>
            <person name="Itoh K."/>
            <person name="Hattori M."/>
        </authorList>
    </citation>
    <scope>NUCLEOTIDE SEQUENCE [LARGE SCALE GENOMIC DNA]</scope>
    <source>
        <strain>SE11</strain>
    </source>
</reference>
<comment type="function">
    <text evidence="1">Catalyzes the synthesis of activated sulfate.</text>
</comment>
<comment type="catalytic activity">
    <reaction evidence="1">
        <text>adenosine 5'-phosphosulfate + ATP = 3'-phosphoadenylyl sulfate + ADP + H(+)</text>
        <dbReference type="Rhea" id="RHEA:24152"/>
        <dbReference type="ChEBI" id="CHEBI:15378"/>
        <dbReference type="ChEBI" id="CHEBI:30616"/>
        <dbReference type="ChEBI" id="CHEBI:58243"/>
        <dbReference type="ChEBI" id="CHEBI:58339"/>
        <dbReference type="ChEBI" id="CHEBI:456216"/>
        <dbReference type="EC" id="2.7.1.25"/>
    </reaction>
</comment>
<comment type="pathway">
    <text evidence="1">Sulfur metabolism; hydrogen sulfide biosynthesis; sulfite from sulfate: step 2/3.</text>
</comment>
<comment type="similarity">
    <text evidence="1">Belongs to the APS kinase family.</text>
</comment>
<organism>
    <name type="scientific">Escherichia coli (strain SE11)</name>
    <dbReference type="NCBI Taxonomy" id="409438"/>
    <lineage>
        <taxon>Bacteria</taxon>
        <taxon>Pseudomonadati</taxon>
        <taxon>Pseudomonadota</taxon>
        <taxon>Gammaproteobacteria</taxon>
        <taxon>Enterobacterales</taxon>
        <taxon>Enterobacteriaceae</taxon>
        <taxon>Escherichia</taxon>
    </lineage>
</organism>
<keyword id="KW-0067">ATP-binding</keyword>
<keyword id="KW-0418">Kinase</keyword>
<keyword id="KW-0547">Nucleotide-binding</keyword>
<keyword id="KW-0597">Phosphoprotein</keyword>
<keyword id="KW-0808">Transferase</keyword>
<sequence length="201" mass="22321">MALHDENVVWHSHPVTVQQRELHHGHRGVVLWFTGLSGSGKSTVAGALEEALHKLGVSTYLLDGDNVRHGLCSDLGFSDADRKENIRRVGEVANLMVEAGLVVLTAFISPHRAERQMVRERVGEGRFIEVFVDTPLAICEARDPKGLYKKARAGELRNFTGIDSVYEAPESAEIHLNGEQLVTNLVQQLLDLLRQNDIIRS</sequence>
<proteinExistence type="inferred from homology"/>
<protein>
    <recommendedName>
        <fullName evidence="1">Adenylyl-sulfate kinase</fullName>
        <ecNumber evidence="1">2.7.1.25</ecNumber>
    </recommendedName>
    <alternativeName>
        <fullName evidence="1">APS kinase</fullName>
    </alternativeName>
    <alternativeName>
        <fullName evidence="1">ATP adenosine-5'-phosphosulfate 3'-phosphotransferase</fullName>
    </alternativeName>
    <alternativeName>
        <fullName evidence="1">Adenosine-5'-phosphosulfate kinase</fullName>
    </alternativeName>
</protein>
<feature type="chain" id="PRO_1000092241" description="Adenylyl-sulfate kinase">
    <location>
        <begin position="1"/>
        <end position="201"/>
    </location>
</feature>
<feature type="active site" description="Phosphoserine intermediate" evidence="1">
    <location>
        <position position="109"/>
    </location>
</feature>
<feature type="binding site" evidence="1">
    <location>
        <begin position="35"/>
        <end position="42"/>
    </location>
    <ligand>
        <name>ATP</name>
        <dbReference type="ChEBI" id="CHEBI:30616"/>
    </ligand>
</feature>
<name>CYSC_ECOSE</name>
<evidence type="ECO:0000255" key="1">
    <source>
        <dbReference type="HAMAP-Rule" id="MF_00065"/>
    </source>
</evidence>
<accession>B6I6E0</accession>
<gene>
    <name evidence="1" type="primary">cysC</name>
    <name type="ordered locus">ECSE_3002</name>
</gene>
<dbReference type="EC" id="2.7.1.25" evidence="1"/>
<dbReference type="EMBL" id="AP009240">
    <property type="protein sequence ID" value="BAG78526.1"/>
    <property type="molecule type" value="Genomic_DNA"/>
</dbReference>
<dbReference type="RefSeq" id="WP_001173673.1">
    <property type="nucleotide sequence ID" value="NC_011415.1"/>
</dbReference>
<dbReference type="SMR" id="B6I6E0"/>
<dbReference type="GeneID" id="93779256"/>
<dbReference type="KEGG" id="ecy:ECSE_3002"/>
<dbReference type="HOGENOM" id="CLU_046932_1_0_6"/>
<dbReference type="UniPathway" id="UPA00140">
    <property type="reaction ID" value="UER00205"/>
</dbReference>
<dbReference type="Proteomes" id="UP000008199">
    <property type="component" value="Chromosome"/>
</dbReference>
<dbReference type="GO" id="GO:0004020">
    <property type="term" value="F:adenylylsulfate kinase activity"/>
    <property type="evidence" value="ECO:0007669"/>
    <property type="project" value="UniProtKB-UniRule"/>
</dbReference>
<dbReference type="GO" id="GO:0005524">
    <property type="term" value="F:ATP binding"/>
    <property type="evidence" value="ECO:0007669"/>
    <property type="project" value="UniProtKB-UniRule"/>
</dbReference>
<dbReference type="GO" id="GO:0070814">
    <property type="term" value="P:hydrogen sulfide biosynthetic process"/>
    <property type="evidence" value="ECO:0007669"/>
    <property type="project" value="UniProtKB-UniRule"/>
</dbReference>
<dbReference type="GO" id="GO:0000103">
    <property type="term" value="P:sulfate assimilation"/>
    <property type="evidence" value="ECO:0007669"/>
    <property type="project" value="UniProtKB-UniRule"/>
</dbReference>
<dbReference type="CDD" id="cd02027">
    <property type="entry name" value="APSK"/>
    <property type="match status" value="1"/>
</dbReference>
<dbReference type="FunFam" id="3.40.50.300:FF:000212">
    <property type="entry name" value="Adenylyl-sulfate kinase"/>
    <property type="match status" value="1"/>
</dbReference>
<dbReference type="Gene3D" id="3.40.50.300">
    <property type="entry name" value="P-loop containing nucleotide triphosphate hydrolases"/>
    <property type="match status" value="1"/>
</dbReference>
<dbReference type="HAMAP" id="MF_00065">
    <property type="entry name" value="Adenylyl_sulf_kinase"/>
    <property type="match status" value="1"/>
</dbReference>
<dbReference type="InterPro" id="IPR002891">
    <property type="entry name" value="APS_kinase"/>
</dbReference>
<dbReference type="InterPro" id="IPR027417">
    <property type="entry name" value="P-loop_NTPase"/>
</dbReference>
<dbReference type="NCBIfam" id="TIGR00455">
    <property type="entry name" value="apsK"/>
    <property type="match status" value="1"/>
</dbReference>
<dbReference type="NCBIfam" id="NF003013">
    <property type="entry name" value="PRK03846.1"/>
    <property type="match status" value="1"/>
</dbReference>
<dbReference type="PANTHER" id="PTHR11055:SF63">
    <property type="entry name" value="ADENYLYL-SULFATE KINASE 1, CHLOROPLASTIC"/>
    <property type="match status" value="1"/>
</dbReference>
<dbReference type="PANTHER" id="PTHR11055">
    <property type="entry name" value="BIFUNCTIONAL 3'-PHOSPHOADENOSINE 5'-PHOSPHOSULFATE SYNTHASE"/>
    <property type="match status" value="1"/>
</dbReference>
<dbReference type="Pfam" id="PF01583">
    <property type="entry name" value="APS_kinase"/>
    <property type="match status" value="1"/>
</dbReference>
<dbReference type="SUPFAM" id="SSF52540">
    <property type="entry name" value="P-loop containing nucleoside triphosphate hydrolases"/>
    <property type="match status" value="1"/>
</dbReference>